<evidence type="ECO:0000255" key="1">
    <source>
        <dbReference type="HAMAP-Rule" id="MF_00089"/>
    </source>
</evidence>
<comment type="function">
    <text evidence="1">Catalyzes the synthesis of the hydroxymethylpyrimidine phosphate (HMP-P) moiety of thiamine from aminoimidazole ribotide (AIR) in a radical S-adenosyl-L-methionine (SAM)-dependent reaction.</text>
</comment>
<comment type="catalytic activity">
    <reaction evidence="1">
        <text>5-amino-1-(5-phospho-beta-D-ribosyl)imidazole + S-adenosyl-L-methionine = 4-amino-2-methyl-5-(phosphooxymethyl)pyrimidine + CO + 5'-deoxyadenosine + formate + L-methionine + 3 H(+)</text>
        <dbReference type="Rhea" id="RHEA:24840"/>
        <dbReference type="ChEBI" id="CHEBI:15378"/>
        <dbReference type="ChEBI" id="CHEBI:15740"/>
        <dbReference type="ChEBI" id="CHEBI:17245"/>
        <dbReference type="ChEBI" id="CHEBI:17319"/>
        <dbReference type="ChEBI" id="CHEBI:57844"/>
        <dbReference type="ChEBI" id="CHEBI:58354"/>
        <dbReference type="ChEBI" id="CHEBI:59789"/>
        <dbReference type="ChEBI" id="CHEBI:137981"/>
        <dbReference type="EC" id="4.1.99.17"/>
    </reaction>
</comment>
<comment type="cofactor">
    <cofactor evidence="1">
        <name>[4Fe-4S] cluster</name>
        <dbReference type="ChEBI" id="CHEBI:49883"/>
    </cofactor>
    <text evidence="1">Binds 1 [4Fe-4S] cluster per subunit. The cluster is coordinated with 3 cysteines and an exchangeable S-adenosyl-L-methionine.</text>
</comment>
<comment type="pathway">
    <text evidence="1">Cofactor biosynthesis; thiamine diphosphate biosynthesis.</text>
</comment>
<comment type="subunit">
    <text evidence="1">Homodimer.</text>
</comment>
<comment type="similarity">
    <text evidence="1">Belongs to the ThiC family.</text>
</comment>
<accession>B7NRS7</accession>
<proteinExistence type="inferred from homology"/>
<feature type="chain" id="PRO_1000198056" description="Phosphomethylpyrimidine synthase">
    <location>
        <begin position="1"/>
        <end position="631"/>
    </location>
</feature>
<feature type="binding site" evidence="1">
    <location>
        <position position="239"/>
    </location>
    <ligand>
        <name>substrate</name>
    </ligand>
</feature>
<feature type="binding site" evidence="1">
    <location>
        <position position="268"/>
    </location>
    <ligand>
        <name>substrate</name>
    </ligand>
</feature>
<feature type="binding site" evidence="1">
    <location>
        <position position="297"/>
    </location>
    <ligand>
        <name>substrate</name>
    </ligand>
</feature>
<feature type="binding site" evidence="1">
    <location>
        <position position="333"/>
    </location>
    <ligand>
        <name>substrate</name>
    </ligand>
</feature>
<feature type="binding site" evidence="1">
    <location>
        <begin position="353"/>
        <end position="355"/>
    </location>
    <ligand>
        <name>substrate</name>
    </ligand>
</feature>
<feature type="binding site" evidence="1">
    <location>
        <begin position="394"/>
        <end position="397"/>
    </location>
    <ligand>
        <name>substrate</name>
    </ligand>
</feature>
<feature type="binding site" evidence="1">
    <location>
        <position position="433"/>
    </location>
    <ligand>
        <name>substrate</name>
    </ligand>
</feature>
<feature type="binding site" evidence="1">
    <location>
        <position position="437"/>
    </location>
    <ligand>
        <name>Zn(2+)</name>
        <dbReference type="ChEBI" id="CHEBI:29105"/>
    </ligand>
</feature>
<feature type="binding site" evidence="1">
    <location>
        <position position="460"/>
    </location>
    <ligand>
        <name>substrate</name>
    </ligand>
</feature>
<feature type="binding site" evidence="1">
    <location>
        <position position="501"/>
    </location>
    <ligand>
        <name>Zn(2+)</name>
        <dbReference type="ChEBI" id="CHEBI:29105"/>
    </ligand>
</feature>
<feature type="binding site" evidence="1">
    <location>
        <position position="581"/>
    </location>
    <ligand>
        <name>[4Fe-4S] cluster</name>
        <dbReference type="ChEBI" id="CHEBI:49883"/>
        <note>4Fe-4S-S-AdoMet</note>
    </ligand>
</feature>
<feature type="binding site" evidence="1">
    <location>
        <position position="584"/>
    </location>
    <ligand>
        <name>[4Fe-4S] cluster</name>
        <dbReference type="ChEBI" id="CHEBI:49883"/>
        <note>4Fe-4S-S-AdoMet</note>
    </ligand>
</feature>
<feature type="binding site" evidence="1">
    <location>
        <position position="589"/>
    </location>
    <ligand>
        <name>[4Fe-4S] cluster</name>
        <dbReference type="ChEBI" id="CHEBI:49883"/>
        <note>4Fe-4S-S-AdoMet</note>
    </ligand>
</feature>
<protein>
    <recommendedName>
        <fullName evidence="1">Phosphomethylpyrimidine synthase</fullName>
        <ecNumber evidence="1">4.1.99.17</ecNumber>
    </recommendedName>
    <alternativeName>
        <fullName evidence="1">Hydroxymethylpyrimidine phosphate synthase</fullName>
        <shortName evidence="1">HMP-P synthase</shortName>
        <shortName evidence="1">HMP-phosphate synthase</shortName>
        <shortName evidence="1">HMPP synthase</shortName>
    </alternativeName>
    <alternativeName>
        <fullName evidence="1">Thiamine biosynthesis protein ThiC</fullName>
    </alternativeName>
</protein>
<name>THIC_ECO7I</name>
<keyword id="KW-0004">4Fe-4S</keyword>
<keyword id="KW-0408">Iron</keyword>
<keyword id="KW-0411">Iron-sulfur</keyword>
<keyword id="KW-0456">Lyase</keyword>
<keyword id="KW-0479">Metal-binding</keyword>
<keyword id="KW-0949">S-adenosyl-L-methionine</keyword>
<keyword id="KW-0784">Thiamine biosynthesis</keyword>
<keyword id="KW-0862">Zinc</keyword>
<organism>
    <name type="scientific">Escherichia coli O7:K1 (strain IAI39 / ExPEC)</name>
    <dbReference type="NCBI Taxonomy" id="585057"/>
    <lineage>
        <taxon>Bacteria</taxon>
        <taxon>Pseudomonadati</taxon>
        <taxon>Pseudomonadota</taxon>
        <taxon>Gammaproteobacteria</taxon>
        <taxon>Enterobacterales</taxon>
        <taxon>Enterobacteriaceae</taxon>
        <taxon>Escherichia</taxon>
    </lineage>
</organism>
<gene>
    <name evidence="1" type="primary">thiC</name>
    <name type="ordered locus">ECIAI39_4384</name>
</gene>
<reference key="1">
    <citation type="journal article" date="2009" name="PLoS Genet.">
        <title>Organised genome dynamics in the Escherichia coli species results in highly diverse adaptive paths.</title>
        <authorList>
            <person name="Touchon M."/>
            <person name="Hoede C."/>
            <person name="Tenaillon O."/>
            <person name="Barbe V."/>
            <person name="Baeriswyl S."/>
            <person name="Bidet P."/>
            <person name="Bingen E."/>
            <person name="Bonacorsi S."/>
            <person name="Bouchier C."/>
            <person name="Bouvet O."/>
            <person name="Calteau A."/>
            <person name="Chiapello H."/>
            <person name="Clermont O."/>
            <person name="Cruveiller S."/>
            <person name="Danchin A."/>
            <person name="Diard M."/>
            <person name="Dossat C."/>
            <person name="Karoui M.E."/>
            <person name="Frapy E."/>
            <person name="Garry L."/>
            <person name="Ghigo J.M."/>
            <person name="Gilles A.M."/>
            <person name="Johnson J."/>
            <person name="Le Bouguenec C."/>
            <person name="Lescat M."/>
            <person name="Mangenot S."/>
            <person name="Martinez-Jehanne V."/>
            <person name="Matic I."/>
            <person name="Nassif X."/>
            <person name="Oztas S."/>
            <person name="Petit M.A."/>
            <person name="Pichon C."/>
            <person name="Rouy Z."/>
            <person name="Ruf C.S."/>
            <person name="Schneider D."/>
            <person name="Tourret J."/>
            <person name="Vacherie B."/>
            <person name="Vallenet D."/>
            <person name="Medigue C."/>
            <person name="Rocha E.P.C."/>
            <person name="Denamur E."/>
        </authorList>
    </citation>
    <scope>NUCLEOTIDE SEQUENCE [LARGE SCALE GENOMIC DNA]</scope>
    <source>
        <strain>IAI39 / ExPEC</strain>
    </source>
</reference>
<sequence>MSATKLTRREQRTQAQHFIDTLEGTAFPNSKRIYITGTHPGVRVPMREIQLSPTLIGGSKEQPQFEENEAIPVYDTSGPYGDPQIAINVQQGLAKLRQPWIDARGDTEELTVRSSDYTKARLADDGLDELRFSGLLTPKRAKTGRRVTQLHYARQGIITPEMEFIAIRENMGRERIRSEVLRHQHPGMSFGARLPENITAEFVRDEVAAGRAIIPANINHPESEPMIIGRNFLVKVNANIGNSAVTSSIEEEVEKLVWSTRWGADTVMDLSTGRYIHETREWILRNSPVPIGTVPIYQALEKVNGIAEDLTWEAFRDTLLEQAEQGVDYFTIHAGVLLRYVPMTAKRLTGIVSRGGSIMAKWCLSHHQENFLYQHFREICEICAAYDVSLSLGDGLRPGSVQDANDEAQFAELHTLGELTKIAWEYDVQVMIEGPGHVPMQMIRRNMTEELEHCHEAPFYTLGPLTTDIAPGYDHFTSGIGAAMIGWFGCAMLCYVTPKEHLGLPNKEDVKQGLITYKIAAHAADLAKGHPGAQIRDNAMSKARFEFRWEDQFNLALDPFTARAYHDETLPQESGKVAHFCSMCGPKFCSMRISQEVRDYAAAQTIEVGMADMSENFRARGGEIYLRKEEA</sequence>
<dbReference type="EC" id="4.1.99.17" evidence="1"/>
<dbReference type="EMBL" id="CU928164">
    <property type="protein sequence ID" value="CAR20490.1"/>
    <property type="molecule type" value="Genomic_DNA"/>
</dbReference>
<dbReference type="RefSeq" id="WP_001276940.1">
    <property type="nucleotide sequence ID" value="NC_011750.1"/>
</dbReference>
<dbReference type="RefSeq" id="YP_002410258.1">
    <property type="nucleotide sequence ID" value="NC_011750.1"/>
</dbReference>
<dbReference type="SMR" id="B7NRS7"/>
<dbReference type="STRING" id="585057.ECIAI39_4384"/>
<dbReference type="KEGG" id="ect:ECIAI39_4384"/>
<dbReference type="PATRIC" id="fig|585057.6.peg.4530"/>
<dbReference type="HOGENOM" id="CLU_013181_2_1_6"/>
<dbReference type="UniPathway" id="UPA00060"/>
<dbReference type="Proteomes" id="UP000000749">
    <property type="component" value="Chromosome"/>
</dbReference>
<dbReference type="GO" id="GO:0005829">
    <property type="term" value="C:cytosol"/>
    <property type="evidence" value="ECO:0007669"/>
    <property type="project" value="TreeGrafter"/>
</dbReference>
<dbReference type="GO" id="GO:0051539">
    <property type="term" value="F:4 iron, 4 sulfur cluster binding"/>
    <property type="evidence" value="ECO:0007669"/>
    <property type="project" value="UniProtKB-KW"/>
</dbReference>
<dbReference type="GO" id="GO:0016830">
    <property type="term" value="F:carbon-carbon lyase activity"/>
    <property type="evidence" value="ECO:0007669"/>
    <property type="project" value="InterPro"/>
</dbReference>
<dbReference type="GO" id="GO:0008270">
    <property type="term" value="F:zinc ion binding"/>
    <property type="evidence" value="ECO:0007669"/>
    <property type="project" value="UniProtKB-UniRule"/>
</dbReference>
<dbReference type="GO" id="GO:0009228">
    <property type="term" value="P:thiamine biosynthetic process"/>
    <property type="evidence" value="ECO:0007669"/>
    <property type="project" value="UniProtKB-KW"/>
</dbReference>
<dbReference type="GO" id="GO:0009229">
    <property type="term" value="P:thiamine diphosphate biosynthetic process"/>
    <property type="evidence" value="ECO:0007669"/>
    <property type="project" value="UniProtKB-UniRule"/>
</dbReference>
<dbReference type="FunFam" id="3.20.20.540:FF:000001">
    <property type="entry name" value="Phosphomethylpyrimidine synthase"/>
    <property type="match status" value="1"/>
</dbReference>
<dbReference type="Gene3D" id="6.10.250.620">
    <property type="match status" value="1"/>
</dbReference>
<dbReference type="Gene3D" id="3.20.20.540">
    <property type="entry name" value="Radical SAM ThiC family, central domain"/>
    <property type="match status" value="1"/>
</dbReference>
<dbReference type="HAMAP" id="MF_00089">
    <property type="entry name" value="ThiC"/>
    <property type="match status" value="1"/>
</dbReference>
<dbReference type="InterPro" id="IPR037509">
    <property type="entry name" value="ThiC"/>
</dbReference>
<dbReference type="InterPro" id="IPR025747">
    <property type="entry name" value="ThiC-associated_dom"/>
</dbReference>
<dbReference type="InterPro" id="IPR038521">
    <property type="entry name" value="ThiC/Bza_core_dom"/>
</dbReference>
<dbReference type="InterPro" id="IPR002817">
    <property type="entry name" value="ThiC/BzaA/B"/>
</dbReference>
<dbReference type="NCBIfam" id="NF006763">
    <property type="entry name" value="PRK09284.1"/>
    <property type="match status" value="1"/>
</dbReference>
<dbReference type="NCBIfam" id="NF009895">
    <property type="entry name" value="PRK13352.1"/>
    <property type="match status" value="1"/>
</dbReference>
<dbReference type="NCBIfam" id="TIGR00190">
    <property type="entry name" value="thiC"/>
    <property type="match status" value="1"/>
</dbReference>
<dbReference type="PANTHER" id="PTHR30557:SF1">
    <property type="entry name" value="PHOSPHOMETHYLPYRIMIDINE SYNTHASE, CHLOROPLASTIC"/>
    <property type="match status" value="1"/>
</dbReference>
<dbReference type="PANTHER" id="PTHR30557">
    <property type="entry name" value="THIAMINE BIOSYNTHESIS PROTEIN THIC"/>
    <property type="match status" value="1"/>
</dbReference>
<dbReference type="Pfam" id="PF13667">
    <property type="entry name" value="ThiC-associated"/>
    <property type="match status" value="1"/>
</dbReference>
<dbReference type="Pfam" id="PF01964">
    <property type="entry name" value="ThiC_Rad_SAM"/>
    <property type="match status" value="1"/>
</dbReference>
<dbReference type="SFLD" id="SFLDF00407">
    <property type="entry name" value="phosphomethylpyrimidine_syntha"/>
    <property type="match status" value="1"/>
</dbReference>
<dbReference type="SFLD" id="SFLDG01114">
    <property type="entry name" value="phosphomethylpyrimidine_syntha"/>
    <property type="match status" value="1"/>
</dbReference>
<dbReference type="SFLD" id="SFLDS00113">
    <property type="entry name" value="Radical_SAM_Phosphomethylpyrim"/>
    <property type="match status" value="1"/>
</dbReference>